<feature type="chain" id="PRO_1000128746" description="Large ribosomal subunit protein bL27">
    <location>
        <begin position="1"/>
        <end position="85"/>
    </location>
</feature>
<feature type="region of interest" description="Disordered" evidence="2">
    <location>
        <begin position="1"/>
        <end position="20"/>
    </location>
</feature>
<comment type="similarity">
    <text evidence="1">Belongs to the bacterial ribosomal protein bL27 family.</text>
</comment>
<name>RL27_ECOLU</name>
<gene>
    <name evidence="1" type="primary">rpmA</name>
    <name type="ordered locus">ECUMN_3665</name>
</gene>
<proteinExistence type="inferred from homology"/>
<accession>B7NDG9</accession>
<organism>
    <name type="scientific">Escherichia coli O17:K52:H18 (strain UMN026 / ExPEC)</name>
    <dbReference type="NCBI Taxonomy" id="585056"/>
    <lineage>
        <taxon>Bacteria</taxon>
        <taxon>Pseudomonadati</taxon>
        <taxon>Pseudomonadota</taxon>
        <taxon>Gammaproteobacteria</taxon>
        <taxon>Enterobacterales</taxon>
        <taxon>Enterobacteriaceae</taxon>
        <taxon>Escherichia</taxon>
    </lineage>
</organism>
<evidence type="ECO:0000255" key="1">
    <source>
        <dbReference type="HAMAP-Rule" id="MF_00539"/>
    </source>
</evidence>
<evidence type="ECO:0000256" key="2">
    <source>
        <dbReference type="SAM" id="MobiDB-lite"/>
    </source>
</evidence>
<evidence type="ECO:0000305" key="3"/>
<reference key="1">
    <citation type="journal article" date="2009" name="PLoS Genet.">
        <title>Organised genome dynamics in the Escherichia coli species results in highly diverse adaptive paths.</title>
        <authorList>
            <person name="Touchon M."/>
            <person name="Hoede C."/>
            <person name="Tenaillon O."/>
            <person name="Barbe V."/>
            <person name="Baeriswyl S."/>
            <person name="Bidet P."/>
            <person name="Bingen E."/>
            <person name="Bonacorsi S."/>
            <person name="Bouchier C."/>
            <person name="Bouvet O."/>
            <person name="Calteau A."/>
            <person name="Chiapello H."/>
            <person name="Clermont O."/>
            <person name="Cruveiller S."/>
            <person name="Danchin A."/>
            <person name="Diard M."/>
            <person name="Dossat C."/>
            <person name="Karoui M.E."/>
            <person name="Frapy E."/>
            <person name="Garry L."/>
            <person name="Ghigo J.M."/>
            <person name="Gilles A.M."/>
            <person name="Johnson J."/>
            <person name="Le Bouguenec C."/>
            <person name="Lescat M."/>
            <person name="Mangenot S."/>
            <person name="Martinez-Jehanne V."/>
            <person name="Matic I."/>
            <person name="Nassif X."/>
            <person name="Oztas S."/>
            <person name="Petit M.A."/>
            <person name="Pichon C."/>
            <person name="Rouy Z."/>
            <person name="Ruf C.S."/>
            <person name="Schneider D."/>
            <person name="Tourret J."/>
            <person name="Vacherie B."/>
            <person name="Vallenet D."/>
            <person name="Medigue C."/>
            <person name="Rocha E.P.C."/>
            <person name="Denamur E."/>
        </authorList>
    </citation>
    <scope>NUCLEOTIDE SEQUENCE [LARGE SCALE GENOMIC DNA]</scope>
    <source>
        <strain>UMN026 / ExPEC</strain>
    </source>
</reference>
<protein>
    <recommendedName>
        <fullName evidence="1">Large ribosomal subunit protein bL27</fullName>
    </recommendedName>
    <alternativeName>
        <fullName evidence="3">50S ribosomal protein L27</fullName>
    </alternativeName>
</protein>
<keyword id="KW-0687">Ribonucleoprotein</keyword>
<keyword id="KW-0689">Ribosomal protein</keyword>
<sequence>MAHKKAGGSTRNGRDSEAKRLGVKRFGGESVLAGSIIVRQRGTKFHAGANVGCGRDHTLFAKADGKVKFEVKGPKNRKFISIEAE</sequence>
<dbReference type="EMBL" id="CU928163">
    <property type="protein sequence ID" value="CAR14819.1"/>
    <property type="molecule type" value="Genomic_DNA"/>
</dbReference>
<dbReference type="RefSeq" id="WP_000940595.1">
    <property type="nucleotide sequence ID" value="NC_011751.1"/>
</dbReference>
<dbReference type="RefSeq" id="YP_002414324.1">
    <property type="nucleotide sequence ID" value="NC_011751.1"/>
</dbReference>
<dbReference type="SMR" id="B7NDG9"/>
<dbReference type="STRING" id="585056.ECUMN_3665"/>
<dbReference type="GeneID" id="93778796"/>
<dbReference type="KEGG" id="eum:ECUMN_3665"/>
<dbReference type="PATRIC" id="fig|585056.7.peg.3845"/>
<dbReference type="HOGENOM" id="CLU_095424_4_1_6"/>
<dbReference type="Proteomes" id="UP000007097">
    <property type="component" value="Chromosome"/>
</dbReference>
<dbReference type="GO" id="GO:0022625">
    <property type="term" value="C:cytosolic large ribosomal subunit"/>
    <property type="evidence" value="ECO:0007669"/>
    <property type="project" value="TreeGrafter"/>
</dbReference>
<dbReference type="GO" id="GO:0003735">
    <property type="term" value="F:structural constituent of ribosome"/>
    <property type="evidence" value="ECO:0007669"/>
    <property type="project" value="InterPro"/>
</dbReference>
<dbReference type="GO" id="GO:0006412">
    <property type="term" value="P:translation"/>
    <property type="evidence" value="ECO:0007669"/>
    <property type="project" value="UniProtKB-UniRule"/>
</dbReference>
<dbReference type="FunFam" id="2.40.50.100:FF:000001">
    <property type="entry name" value="50S ribosomal protein L27"/>
    <property type="match status" value="1"/>
</dbReference>
<dbReference type="Gene3D" id="2.40.50.100">
    <property type="match status" value="1"/>
</dbReference>
<dbReference type="HAMAP" id="MF_00539">
    <property type="entry name" value="Ribosomal_bL27"/>
    <property type="match status" value="1"/>
</dbReference>
<dbReference type="InterPro" id="IPR001684">
    <property type="entry name" value="Ribosomal_bL27"/>
</dbReference>
<dbReference type="InterPro" id="IPR018261">
    <property type="entry name" value="Ribosomal_bL27_CS"/>
</dbReference>
<dbReference type="NCBIfam" id="TIGR00062">
    <property type="entry name" value="L27"/>
    <property type="match status" value="1"/>
</dbReference>
<dbReference type="PANTHER" id="PTHR15893:SF0">
    <property type="entry name" value="LARGE RIBOSOMAL SUBUNIT PROTEIN BL27M"/>
    <property type="match status" value="1"/>
</dbReference>
<dbReference type="PANTHER" id="PTHR15893">
    <property type="entry name" value="RIBOSOMAL PROTEIN L27"/>
    <property type="match status" value="1"/>
</dbReference>
<dbReference type="Pfam" id="PF01016">
    <property type="entry name" value="Ribosomal_L27"/>
    <property type="match status" value="1"/>
</dbReference>
<dbReference type="PRINTS" id="PR00063">
    <property type="entry name" value="RIBOSOMALL27"/>
</dbReference>
<dbReference type="SUPFAM" id="SSF110324">
    <property type="entry name" value="Ribosomal L27 protein-like"/>
    <property type="match status" value="1"/>
</dbReference>
<dbReference type="PROSITE" id="PS00831">
    <property type="entry name" value="RIBOSOMAL_L27"/>
    <property type="match status" value="1"/>
</dbReference>